<proteinExistence type="evidence at transcript level"/>
<name>CCNB_MARGL</name>
<evidence type="ECO:0000305" key="1"/>
<comment type="function">
    <text>Essential for the control of the cell cycle at the G2/M (mitosis) transition.</text>
</comment>
<comment type="subunit">
    <text>Interacts with the CDK1 protein kinase to form a serine/threonine kinase holoenzyme complex also known as maturation promoting factor (MPF). The cyclin subunit imparts substrate specificity to the complex.</text>
</comment>
<comment type="developmental stage">
    <text>Accumulates steadily during G2 and is abruptly destroyed at mitosis.</text>
</comment>
<comment type="similarity">
    <text evidence="1">Belongs to the cyclin family. Cyclin AB subfamily.</text>
</comment>
<keyword id="KW-0131">Cell cycle</keyword>
<keyword id="KW-0132">Cell division</keyword>
<keyword id="KW-0195">Cyclin</keyword>
<keyword id="KW-0498">Mitosis</keyword>
<organism>
    <name type="scientific">Marthasterias glacialis</name>
    <name type="common">Spiny starfish</name>
    <dbReference type="NCBI Taxonomy" id="7609"/>
    <lineage>
        <taxon>Eukaryota</taxon>
        <taxon>Metazoa</taxon>
        <taxon>Echinodermata</taxon>
        <taxon>Eleutherozoa</taxon>
        <taxon>Asterozoa</taxon>
        <taxon>Asteroidea</taxon>
        <taxon>Forcipulatacea</taxon>
        <taxon>Forcipulatida</taxon>
        <taxon>Asteriidae</taxon>
        <taxon>Marthasterias</taxon>
    </lineage>
</organism>
<feature type="chain" id="PRO_0000080386" description="G2/mitotic-specific cyclin-B">
    <location>
        <begin position="1"/>
        <end position="388"/>
    </location>
</feature>
<accession>P15206</accession>
<protein>
    <recommendedName>
        <fullName>G2/mitotic-specific cyclin-B</fullName>
    </recommendedName>
</protein>
<dbReference type="EMBL" id="X16628">
    <property type="protein sequence ID" value="CAA34624.1"/>
    <property type="molecule type" value="mRNA"/>
</dbReference>
<dbReference type="PIR" id="S06012">
    <property type="entry name" value="S06012"/>
</dbReference>
<dbReference type="SMR" id="P15206"/>
<dbReference type="IntAct" id="P15206">
    <property type="interactions" value="1"/>
</dbReference>
<dbReference type="BindingDB" id="P15206"/>
<dbReference type="GO" id="GO:0016538">
    <property type="term" value="F:cyclin-dependent protein serine/threonine kinase regulator activity"/>
    <property type="evidence" value="ECO:0007669"/>
    <property type="project" value="InterPro"/>
</dbReference>
<dbReference type="GO" id="GO:0051301">
    <property type="term" value="P:cell division"/>
    <property type="evidence" value="ECO:0007669"/>
    <property type="project" value="UniProtKB-KW"/>
</dbReference>
<dbReference type="GO" id="GO:0044772">
    <property type="term" value="P:mitotic cell cycle phase transition"/>
    <property type="evidence" value="ECO:0007669"/>
    <property type="project" value="InterPro"/>
</dbReference>
<dbReference type="CDD" id="cd20507">
    <property type="entry name" value="CYCLIN_CCNB1-like_rpt1"/>
    <property type="match status" value="1"/>
</dbReference>
<dbReference type="CDD" id="cd20509">
    <property type="entry name" value="CYCLIN_CCNB1-like_rpt2"/>
    <property type="match status" value="1"/>
</dbReference>
<dbReference type="FunFam" id="1.10.472.10:FF:000198">
    <property type="entry name" value="G2/mitotic-specific cyclin-B1"/>
    <property type="match status" value="1"/>
</dbReference>
<dbReference type="Gene3D" id="1.10.472.10">
    <property type="entry name" value="Cyclin-like"/>
    <property type="match status" value="2"/>
</dbReference>
<dbReference type="InterPro" id="IPR039361">
    <property type="entry name" value="Cyclin"/>
</dbReference>
<dbReference type="InterPro" id="IPR013763">
    <property type="entry name" value="Cyclin-like_dom"/>
</dbReference>
<dbReference type="InterPro" id="IPR036915">
    <property type="entry name" value="Cyclin-like_sf"/>
</dbReference>
<dbReference type="InterPro" id="IPR046965">
    <property type="entry name" value="Cyclin_A/B-like"/>
</dbReference>
<dbReference type="InterPro" id="IPR004367">
    <property type="entry name" value="Cyclin_C-dom"/>
</dbReference>
<dbReference type="InterPro" id="IPR006671">
    <property type="entry name" value="Cyclin_N"/>
</dbReference>
<dbReference type="InterPro" id="IPR048258">
    <property type="entry name" value="Cyclins_cyclin-box"/>
</dbReference>
<dbReference type="PANTHER" id="PTHR10177">
    <property type="entry name" value="CYCLINS"/>
    <property type="match status" value="1"/>
</dbReference>
<dbReference type="Pfam" id="PF02984">
    <property type="entry name" value="Cyclin_C"/>
    <property type="match status" value="1"/>
</dbReference>
<dbReference type="Pfam" id="PF00134">
    <property type="entry name" value="Cyclin_N"/>
    <property type="match status" value="1"/>
</dbReference>
<dbReference type="PIRSF" id="PIRSF001771">
    <property type="entry name" value="Cyclin_A_B_D_E"/>
    <property type="match status" value="1"/>
</dbReference>
<dbReference type="SMART" id="SM00385">
    <property type="entry name" value="CYCLIN"/>
    <property type="match status" value="2"/>
</dbReference>
<dbReference type="SMART" id="SM01332">
    <property type="entry name" value="Cyclin_C"/>
    <property type="match status" value="1"/>
</dbReference>
<dbReference type="SUPFAM" id="SSF47954">
    <property type="entry name" value="Cyclin-like"/>
    <property type="match status" value="2"/>
</dbReference>
<dbReference type="PROSITE" id="PS00292">
    <property type="entry name" value="CYCLINS"/>
    <property type="match status" value="1"/>
</dbReference>
<reference key="1">
    <citation type="journal article" date="1989" name="EMBO J.">
        <title>MPF from starfish oocytes at first meiotic metaphase is a heterodimer containing one molecule of cdc2 and one molecule of cyclin B.</title>
        <authorList>
            <person name="Labbe J.-C."/>
            <person name="Capony J.-P."/>
            <person name="Caput D."/>
            <person name="Cavadore J.-C."/>
            <person name="Derancourt J."/>
            <person name="Kaghad M."/>
            <person name="Lelias J.M."/>
            <person name="Picard A."/>
            <person name="Doree M."/>
        </authorList>
    </citation>
    <scope>NUCLEOTIDE SEQUENCE [MRNA]</scope>
</reference>
<sequence>MLNGENVDSRIMGKVATRASSKGVKSTLGTRGALENISNVARNNLQAGAKKELVKAKRGMTKSKATSSLQSVMGLNVEPMEKAKPQSPEPMDMSEINSALEAFSQNLLEGVEDIDKNDFDNPQLCSEFVNDIYQYMRKLEREFKVRTDYMTIQEITERMRSILIDWLVQVHLRFHLLQETLFLTIQILDRYLEVQPVSKNKLQLVGVTSMLIAAKYEEMYPPEIGDFVYITDNAYTKAQIRSMECNILRRLDFSLGKPLCIHFLRRNSKAGGVDGQKHTMAKYLMELTLPEYAFVPYDPSEIAAAALCLSSKILEPDMEWGTTLVHYSAYSEDHLMPIVQKMALVLKNAPTAKFQAVRKKYSSAKFMNVSTISALTSSTVMDLADQMC</sequence>